<organism>
    <name type="scientific">Cuscuta obtusiflora</name>
    <name type="common">Peruvian dodder</name>
    <dbReference type="NCBI Taxonomy" id="437280"/>
    <lineage>
        <taxon>Eukaryota</taxon>
        <taxon>Viridiplantae</taxon>
        <taxon>Streptophyta</taxon>
        <taxon>Embryophyta</taxon>
        <taxon>Tracheophyta</taxon>
        <taxon>Spermatophyta</taxon>
        <taxon>Magnoliopsida</taxon>
        <taxon>eudicotyledons</taxon>
        <taxon>Gunneridae</taxon>
        <taxon>Pentapetalae</taxon>
        <taxon>asterids</taxon>
        <taxon>lamiids</taxon>
        <taxon>Solanales</taxon>
        <taxon>Convolvulaceae</taxon>
        <taxon>Cuscuteae</taxon>
        <taxon>Cuscuta</taxon>
        <taxon>Cuscuta subgen. Grammica</taxon>
        <taxon>Cuscuta sect. Cleistogrammica</taxon>
    </lineage>
</organism>
<keyword id="KW-0472">Membrane</keyword>
<keyword id="KW-0934">Plastid</keyword>
<keyword id="KW-0812">Transmembrane</keyword>
<keyword id="KW-1133">Transmembrane helix</keyword>
<evidence type="ECO:0000255" key="1">
    <source>
        <dbReference type="HAMAP-Rule" id="MF_00293"/>
    </source>
</evidence>
<evidence type="ECO:0000305" key="2"/>
<name>PSBN_CUSOB</name>
<comment type="function">
    <text evidence="1">May play a role in photosystem I and II biogenesis.</text>
</comment>
<comment type="subcellular location">
    <subcellularLocation>
        <location evidence="2">Plastid membrane</location>
        <topology evidence="1">Single-pass membrane protein</topology>
    </subcellularLocation>
</comment>
<comment type="similarity">
    <text evidence="1">Belongs to the PsbN family.</text>
</comment>
<comment type="caution">
    <text evidence="2">Only inflorescences, fruits, starved seedlings and stressed stem tips are green in this organism.</text>
</comment>
<comment type="caution">
    <text evidence="1">Originally thought to be a component of PSII; based on experiments in Synechocystis, N.tabacum and barley, and its absence from PSII in T.elongatus and T.vulcanus, this is probably not true.</text>
</comment>
<sequence length="46" mass="5152">MELATLVTLFVSGLLMSFTGYALYTAFGQPSQQLRDPFEEHGNELK</sequence>
<feature type="chain" id="PRO_0000362188" description="Protein PsbN">
    <location>
        <begin position="1"/>
        <end position="46"/>
    </location>
</feature>
<feature type="transmembrane region" description="Helical" evidence="1">
    <location>
        <begin position="5"/>
        <end position="27"/>
    </location>
</feature>
<proteinExistence type="inferred from homology"/>
<protein>
    <recommendedName>
        <fullName evidence="1">Protein PsbN</fullName>
    </recommendedName>
</protein>
<gene>
    <name evidence="1" type="primary">psbN</name>
</gene>
<dbReference type="EMBL" id="EU189133">
    <property type="protein sequence ID" value="ABW20586.1"/>
    <property type="molecule type" value="Genomic_DNA"/>
</dbReference>
<dbReference type="RefSeq" id="YP_001531241.1">
    <property type="nucleotide sequence ID" value="NC_009949.1"/>
</dbReference>
<dbReference type="SMR" id="A8W3L1"/>
<dbReference type="GeneID" id="5714817"/>
<dbReference type="GO" id="GO:0042170">
    <property type="term" value="C:plastid membrane"/>
    <property type="evidence" value="ECO:0007669"/>
    <property type="project" value="UniProtKB-SubCell"/>
</dbReference>
<dbReference type="GO" id="GO:0042651">
    <property type="term" value="C:thylakoid membrane"/>
    <property type="evidence" value="ECO:0007669"/>
    <property type="project" value="UniProtKB-UniRule"/>
</dbReference>
<dbReference type="GO" id="GO:0015979">
    <property type="term" value="P:photosynthesis"/>
    <property type="evidence" value="ECO:0007669"/>
    <property type="project" value="InterPro"/>
</dbReference>
<dbReference type="HAMAP" id="MF_00293">
    <property type="entry name" value="PSII_PsbN"/>
    <property type="match status" value="1"/>
</dbReference>
<dbReference type="InterPro" id="IPR003398">
    <property type="entry name" value="PSII_PsbN"/>
</dbReference>
<dbReference type="PANTHER" id="PTHR35326">
    <property type="entry name" value="PROTEIN PSBN"/>
    <property type="match status" value="1"/>
</dbReference>
<dbReference type="PANTHER" id="PTHR35326:SF3">
    <property type="entry name" value="PROTEIN PSBN"/>
    <property type="match status" value="1"/>
</dbReference>
<dbReference type="Pfam" id="PF02468">
    <property type="entry name" value="PsbN"/>
    <property type="match status" value="1"/>
</dbReference>
<reference key="1">
    <citation type="journal article" date="2007" name="BMC Plant Biol.">
        <title>Complete plastid genome sequences suggest strong selection for retention of photosynthetic genes in the parasitic plant genus Cuscuta.</title>
        <authorList>
            <person name="McNeal J.R."/>
            <person name="Kuehl J.V."/>
            <person name="Boore J.L."/>
            <person name="dePamphilis C.W."/>
        </authorList>
    </citation>
    <scope>NUCLEOTIDE SEQUENCE [LARGE SCALE GENOMIC DNA]</scope>
</reference>
<geneLocation type="plastid"/>
<accession>A8W3L1</accession>